<proteinExistence type="predicted"/>
<organism>
    <name type="scientific">Bacillus subtilis (strain 168)</name>
    <dbReference type="NCBI Taxonomy" id="224308"/>
    <lineage>
        <taxon>Bacteria</taxon>
        <taxon>Bacillati</taxon>
        <taxon>Bacillota</taxon>
        <taxon>Bacilli</taxon>
        <taxon>Bacillales</taxon>
        <taxon>Bacillaceae</taxon>
        <taxon>Bacillus</taxon>
    </lineage>
</organism>
<gene>
    <name type="primary">yosK</name>
    <name type="ordered locus">BSU20090</name>
</gene>
<dbReference type="EMBL" id="AL009126">
    <property type="protein sequence ID" value="CAB13901.1"/>
    <property type="molecule type" value="Genomic_DNA"/>
</dbReference>
<dbReference type="RefSeq" id="NP_389891.1">
    <property type="nucleotide sequence ID" value="NC_000964.3"/>
</dbReference>
<dbReference type="RefSeq" id="WP_009967463.1">
    <property type="nucleotide sequence ID" value="NZ_OZ025638.1"/>
</dbReference>
<dbReference type="FunCoup" id="O31878">
    <property type="interactions" value="60"/>
</dbReference>
<dbReference type="STRING" id="224308.BSU20090"/>
<dbReference type="PaxDb" id="224308-BSU20090"/>
<dbReference type="EnsemblBacteria" id="CAB13901">
    <property type="protein sequence ID" value="CAB13901"/>
    <property type="gene ID" value="BSU_20090"/>
</dbReference>
<dbReference type="GeneID" id="939546"/>
<dbReference type="KEGG" id="bsu:BSU20090"/>
<dbReference type="PATRIC" id="fig|224308.179.peg.2199"/>
<dbReference type="InParanoid" id="O31878"/>
<dbReference type="OrthoDB" id="2891623at2"/>
<dbReference type="BioCyc" id="BSUB:BSU20090-MONOMER"/>
<dbReference type="Proteomes" id="UP000001570">
    <property type="component" value="Chromosome"/>
</dbReference>
<protein>
    <recommendedName>
        <fullName>SPbeta prophage-derived uncharacterized protein YosK</fullName>
    </recommendedName>
</protein>
<sequence>MSQSNYRPSVPRWVGDILELDKKRRQNQYRGSLTSGQEKKDWDEWKRRYSRKLKYARLNGWTIEEE</sequence>
<reference key="1">
    <citation type="journal article" date="1997" name="Nature">
        <title>The complete genome sequence of the Gram-positive bacterium Bacillus subtilis.</title>
        <authorList>
            <person name="Kunst F."/>
            <person name="Ogasawara N."/>
            <person name="Moszer I."/>
            <person name="Albertini A.M."/>
            <person name="Alloni G."/>
            <person name="Azevedo V."/>
            <person name="Bertero M.G."/>
            <person name="Bessieres P."/>
            <person name="Bolotin A."/>
            <person name="Borchert S."/>
            <person name="Borriss R."/>
            <person name="Boursier L."/>
            <person name="Brans A."/>
            <person name="Braun M."/>
            <person name="Brignell S.C."/>
            <person name="Bron S."/>
            <person name="Brouillet S."/>
            <person name="Bruschi C.V."/>
            <person name="Caldwell B."/>
            <person name="Capuano V."/>
            <person name="Carter N.M."/>
            <person name="Choi S.-K."/>
            <person name="Codani J.-J."/>
            <person name="Connerton I.F."/>
            <person name="Cummings N.J."/>
            <person name="Daniel R.A."/>
            <person name="Denizot F."/>
            <person name="Devine K.M."/>
            <person name="Duesterhoeft A."/>
            <person name="Ehrlich S.D."/>
            <person name="Emmerson P.T."/>
            <person name="Entian K.-D."/>
            <person name="Errington J."/>
            <person name="Fabret C."/>
            <person name="Ferrari E."/>
            <person name="Foulger D."/>
            <person name="Fritz C."/>
            <person name="Fujita M."/>
            <person name="Fujita Y."/>
            <person name="Fuma S."/>
            <person name="Galizzi A."/>
            <person name="Galleron N."/>
            <person name="Ghim S.-Y."/>
            <person name="Glaser P."/>
            <person name="Goffeau A."/>
            <person name="Golightly E.J."/>
            <person name="Grandi G."/>
            <person name="Guiseppi G."/>
            <person name="Guy B.J."/>
            <person name="Haga K."/>
            <person name="Haiech J."/>
            <person name="Harwood C.R."/>
            <person name="Henaut A."/>
            <person name="Hilbert H."/>
            <person name="Holsappel S."/>
            <person name="Hosono S."/>
            <person name="Hullo M.-F."/>
            <person name="Itaya M."/>
            <person name="Jones L.-M."/>
            <person name="Joris B."/>
            <person name="Karamata D."/>
            <person name="Kasahara Y."/>
            <person name="Klaerr-Blanchard M."/>
            <person name="Klein C."/>
            <person name="Kobayashi Y."/>
            <person name="Koetter P."/>
            <person name="Koningstein G."/>
            <person name="Krogh S."/>
            <person name="Kumano M."/>
            <person name="Kurita K."/>
            <person name="Lapidus A."/>
            <person name="Lardinois S."/>
            <person name="Lauber J."/>
            <person name="Lazarevic V."/>
            <person name="Lee S.-M."/>
            <person name="Levine A."/>
            <person name="Liu H."/>
            <person name="Masuda S."/>
            <person name="Mauel C."/>
            <person name="Medigue C."/>
            <person name="Medina N."/>
            <person name="Mellado R.P."/>
            <person name="Mizuno M."/>
            <person name="Moestl D."/>
            <person name="Nakai S."/>
            <person name="Noback M."/>
            <person name="Noone D."/>
            <person name="O'Reilly M."/>
            <person name="Ogawa K."/>
            <person name="Ogiwara A."/>
            <person name="Oudega B."/>
            <person name="Park S.-H."/>
            <person name="Parro V."/>
            <person name="Pohl T.M."/>
            <person name="Portetelle D."/>
            <person name="Porwollik S."/>
            <person name="Prescott A.M."/>
            <person name="Presecan E."/>
            <person name="Pujic P."/>
            <person name="Purnelle B."/>
            <person name="Rapoport G."/>
            <person name="Rey M."/>
            <person name="Reynolds S."/>
            <person name="Rieger M."/>
            <person name="Rivolta C."/>
            <person name="Rocha E."/>
            <person name="Roche B."/>
            <person name="Rose M."/>
            <person name="Sadaie Y."/>
            <person name="Sato T."/>
            <person name="Scanlan E."/>
            <person name="Schleich S."/>
            <person name="Schroeter R."/>
            <person name="Scoffone F."/>
            <person name="Sekiguchi J."/>
            <person name="Sekowska A."/>
            <person name="Seror S.J."/>
            <person name="Serror P."/>
            <person name="Shin B.-S."/>
            <person name="Soldo B."/>
            <person name="Sorokin A."/>
            <person name="Tacconi E."/>
            <person name="Takagi T."/>
            <person name="Takahashi H."/>
            <person name="Takemaru K."/>
            <person name="Takeuchi M."/>
            <person name="Tamakoshi A."/>
            <person name="Tanaka T."/>
            <person name="Terpstra P."/>
            <person name="Tognoni A."/>
            <person name="Tosato V."/>
            <person name="Uchiyama S."/>
            <person name="Vandenbol M."/>
            <person name="Vannier F."/>
            <person name="Vassarotti A."/>
            <person name="Viari A."/>
            <person name="Wambutt R."/>
            <person name="Wedler E."/>
            <person name="Wedler H."/>
            <person name="Weitzenegger T."/>
            <person name="Winters P."/>
            <person name="Wipat A."/>
            <person name="Yamamoto H."/>
            <person name="Yamane K."/>
            <person name="Yasumoto K."/>
            <person name="Yata K."/>
            <person name="Yoshida K."/>
            <person name="Yoshikawa H.-F."/>
            <person name="Zumstein E."/>
            <person name="Yoshikawa H."/>
            <person name="Danchin A."/>
        </authorList>
    </citation>
    <scope>NUCLEOTIDE SEQUENCE [LARGE SCALE GENOMIC DNA]</scope>
    <source>
        <strain>168</strain>
    </source>
</reference>
<feature type="chain" id="PRO_0000369130" description="SPbeta prophage-derived uncharacterized protein YosK">
    <location>
        <begin position="1"/>
        <end position="66"/>
    </location>
</feature>
<name>YOSK_BACSU</name>
<keyword id="KW-1185">Reference proteome</keyword>
<accession>O31878</accession>